<sequence>MMPRNNLEASTCKMAEPFNFEKKESKPPPQDPLRSPVAQHNHPTFRLKSPENGNTKNNFLLCEQNKQYLASQEDSSVVSSNPAVVNGEVGGSKGDRKPPPTGNPVSPLSLGNSSPPNQVKTKPSSNVTPEKSKKSHKLFENALSVNNPALFNSLGPPLRSTTCHRCGLFGSLRCSQCKQTYYCSTACQRRDWSSHSTICRPVQQSLNKLEDNKSPFETKAIEVKSEVDCPPGVTKEITAGAERVMFSDLRSLQLKKTMEIKGTVTEFKHPSNFYIQLYSSEVLENMNQLSTSLKETYANVVPEDGYLPVKGEVCVAKYTVDQTWNRAIVQAVDVLQRKAHVLYIDYGNEEMIPIDSVHPLSRGLDLFPPSAIKCCVSGVIPTAGEWSEGCVAAVKALLFEQFCSVKVMDILEEEVLTCAVDLVLQSSGKQLDHVLVEMGYGVKPGEQSSTEQSVDHSALEDVGRVTVESKIVTDRNALIPKVLTLNVGDEFCGVVAHIQTPEDFFCQQLQSGHKLAELQESLSEYCGHVIPRSDFYPTIGDVCCAQFSEDDQWYRASVLAYASEESVLVGYVDYGNFEILSLKRLCPIIPKLLDLPMQALNCVLAGVKPSLGIWTPEAVCVMKEMVQNRMVTVRVVGMLGTRALVELIDKSVAPHVSASKALIDSGFAIKEKDVADKGSSMHTASVPLAIEGPAEALEWTWVEFTVDETVDVVVCMMYSPGEFYCHFLKDDALEKLDDLNQSLADYCAQKPPNGFKAEIGRPCCAFFSGDGNWYRALVKEILPSGNVKVHFVDYGNVEEVTTDQLQAILPQFLLLPFQGMQCWLVDIQPPNKHWTKEATARFQACVVGLKLQARVVEITANGVGVELTDLSTPYPKIISDVLIREQLVLRCGSPQDSLMSRPANQHKQIDSHRVQASPSAEQWKTMELPVNKTIAANVLEIISPALFYAIPSEMSENQEKLCVLAAELLEHCNAQKGQPAYRPRTGDACCAKYTNDDFWYRAIVLETSESDVKVLYADYGNIETLPLSRVQPIPASHLELPFQIIRCSLEGPMELNGSCSQLVMELLRNAMLNQSVVLSVKAISKNVHAVSVEKCSENGMINIAENLVMCGLAENLTSKRKSASTKEIPHSRDCCCTELQKQIEKHEQILLFLLNNPTNQSKFTEMKKLLRS</sequence>
<evidence type="ECO:0000255" key="1">
    <source>
        <dbReference type="PROSITE-ProRule" id="PRU00134"/>
    </source>
</evidence>
<evidence type="ECO:0000255" key="2">
    <source>
        <dbReference type="PROSITE-ProRule" id="PRU00211"/>
    </source>
</evidence>
<evidence type="ECO:0000256" key="3">
    <source>
        <dbReference type="SAM" id="MobiDB-lite"/>
    </source>
</evidence>
<evidence type="ECO:0000269" key="4">
    <source>
    </source>
</evidence>
<evidence type="ECO:0000269" key="5">
    <source>
    </source>
</evidence>
<evidence type="ECO:0000269" key="6">
    <source>
    </source>
</evidence>
<evidence type="ECO:0000269" key="7">
    <source>
    </source>
</evidence>
<evidence type="ECO:0000269" key="8">
    <source>
    </source>
</evidence>
<evidence type="ECO:0000269" key="9">
    <source>
    </source>
</evidence>
<evidence type="ECO:0000269" key="10">
    <source>
    </source>
</evidence>
<evidence type="ECO:0000269" key="11">
    <source>
    </source>
</evidence>
<evidence type="ECO:0000269" key="12">
    <source>
    </source>
</evidence>
<evidence type="ECO:0000269" key="13">
    <source>
    </source>
</evidence>
<evidence type="ECO:0000305" key="14"/>
<evidence type="ECO:0007829" key="15">
    <source>
        <dbReference type="PDB" id="4B9W"/>
    </source>
</evidence>
<accession>Q99MV1</accession>
<accession>A2VDG6</accession>
<accession>Q6F3G0</accession>
<accession>Q8CDN7</accession>
<accession>Q8K1G3</accession>
<comment type="function">
    <text evidence="6 9 10">Plays a central role during spermatogenesis by participating in the repression transposable elements and preventing their mobilization, which is essential for the germline integrity. Acts via the piRNA metabolic process, which mediates the repression of transposable elements during meiosis by forming complexes composed of piRNAs and Piwi proteins and governs the methylation and subsequent repression of transposons. Required for the localization of Piwi proteins to the meiotic nuage. Involved in the piRNA metabolic process by ensuring the entry of correct transcripts into the normal piRNA pool and limiting the entry of cellular transcripts into the piRNA pathway. May act by allowing the recruitment of piRNA biogenesis or loading factors that ensure the correct entry of transcripts and piRNAs into Piwi proteins.</text>
</comment>
<comment type="subunit">
    <text evidence="5 7 8 9 10 12 13">Found in a mRNP complex, at least composed of TDRD1, TDRD6, TDRD7 and DDX4. Interacts with MAEL. Interacts with PIWIL1, PIWIL2 and PIWIL4 (when methylated on arginine residues). Interacts with TDRD12.</text>
</comment>
<comment type="interaction">
    <interactant intactId="EBI-8573364">
        <id>Q99MV1</id>
    </interactant>
    <interactant intactId="EBI-8573412">
        <id>Q8CDG1</id>
        <label>Piwil2</label>
    </interactant>
    <organismsDiffer>false</organismsDiffer>
    <experiments>6</experiments>
</comment>
<comment type="subcellular location">
    <subcellularLocation>
        <location evidence="4 6 7 8 9 10 11">Cytoplasm</location>
    </subcellularLocation>
    <text evidence="11">Component of the meiotic nuage, also named P granule, a germ-cell-specific organelle required to repress transposon activity during meiosis (PubMed:20439430). DDX4 is required for meiotic nuage localization. Also present in chromatoid body.</text>
</comment>
<comment type="tissue specificity">
    <text evidence="4">Testis and ovary specific. Present in germ-line cells and is most abundant in fetal prospermatogonia and postnatal primary spermatocytes (at protein level).</text>
</comment>
<comment type="domain">
    <text>Tudor domains 2 and 3 have higher affinity for arginine-methylated peptides, tudor domain 1 is a poor binder due to an impaired aromatic cage.</text>
</comment>
<comment type="disruption phenotype">
    <text evidence="6 9 10">Male sterility because of postnatal spermatogenic defects due to demethylation and subsequent derepression of transposable elements. Piwi-associated small RNA profiles are altered, piRNPs accepting the entry of abundant cellular transcripts into the piRNA pathway and accumulating piRNAs with a profile that is drastically different from wild-type. Piwi proteins are delocalized from the nucleus to the cytoplasm.</text>
</comment>
<comment type="similarity">
    <text evidence="14">Belongs to the TDRD1 family.</text>
</comment>
<comment type="sequence caution" evidence="14">
    <conflict type="erroneous initiation">
        <sequence resource="EMBL-CDS" id="AAI29955"/>
    </conflict>
</comment>
<comment type="sequence caution" evidence="14">
    <conflict type="erroneous initiation">
        <sequence resource="EMBL-CDS" id="AAI29956"/>
    </conflict>
</comment>
<comment type="sequence caution" evidence="14">
    <conflict type="erroneous initiation">
        <sequence resource="EMBL-CDS" id="AAK31970"/>
    </conflict>
</comment>
<comment type="sequence caution" evidence="14">
    <conflict type="erroneous initiation">
        <sequence resource="EMBL-CDS" id="BAD27578"/>
    </conflict>
</comment>
<reference key="1">
    <citation type="journal article" date="2003" name="Mech. Dev.">
        <title>Mouse Tudor Repeat-1 (MTR-1) is a novel component of chromatoid bodies/nuages in male germ cells and forms a complex with snRNPs.</title>
        <authorList>
            <person name="Chuma S."/>
            <person name="Hiyoshi M."/>
            <person name="Yamamoto A."/>
            <person name="Hosokawa M."/>
            <person name="Takamune K."/>
            <person name="Nakatsuji N."/>
        </authorList>
    </citation>
    <scope>NUCLEOTIDE SEQUENCE [MRNA]</scope>
    <scope>SUBCELLULAR LOCATION</scope>
    <scope>TISSUE SPECIFICITY</scope>
    <source>
        <strain>ICR</strain>
        <tissue>Fetal gonad</tissue>
        <tissue>Testis</tissue>
    </source>
</reference>
<reference key="2">
    <citation type="journal article" date="2006" name="Proc. Natl. Acad. Sci. U.S.A.">
        <title>Tdrd1/Mtr-1, a tudor-related gene, is essential for male germ-cell differentiation and nuage/germinal granule formation in mice.</title>
        <authorList>
            <person name="Chuma S."/>
            <person name="Hosokawa M."/>
            <person name="Kitamura K."/>
            <person name="Kasai S."/>
            <person name="Fujioka M."/>
            <person name="Hiyoshi M."/>
            <person name="Takamune K."/>
            <person name="Noce T."/>
            <person name="Nakatsuji N."/>
        </authorList>
    </citation>
    <scope>NUCLEOTIDE SEQUENCE [MRNA]</scope>
    <scope>FUNCTION</scope>
    <scope>SUBCELLULAR LOCATION</scope>
    <scope>DISRUPTION PHENOTYPE</scope>
    <source>
        <strain>ICR</strain>
        <tissue>Testis</tissue>
    </source>
</reference>
<reference key="3">
    <citation type="journal article" date="2005" name="Science">
        <title>The transcriptional landscape of the mammalian genome.</title>
        <authorList>
            <person name="Carninci P."/>
            <person name="Kasukawa T."/>
            <person name="Katayama S."/>
            <person name="Gough J."/>
            <person name="Frith M.C."/>
            <person name="Maeda N."/>
            <person name="Oyama R."/>
            <person name="Ravasi T."/>
            <person name="Lenhard B."/>
            <person name="Wells C."/>
            <person name="Kodzius R."/>
            <person name="Shimokawa K."/>
            <person name="Bajic V.B."/>
            <person name="Brenner S.E."/>
            <person name="Batalov S."/>
            <person name="Forrest A.R."/>
            <person name="Zavolan M."/>
            <person name="Davis M.J."/>
            <person name="Wilming L.G."/>
            <person name="Aidinis V."/>
            <person name="Allen J.E."/>
            <person name="Ambesi-Impiombato A."/>
            <person name="Apweiler R."/>
            <person name="Aturaliya R.N."/>
            <person name="Bailey T.L."/>
            <person name="Bansal M."/>
            <person name="Baxter L."/>
            <person name="Beisel K.W."/>
            <person name="Bersano T."/>
            <person name="Bono H."/>
            <person name="Chalk A.M."/>
            <person name="Chiu K.P."/>
            <person name="Choudhary V."/>
            <person name="Christoffels A."/>
            <person name="Clutterbuck D.R."/>
            <person name="Crowe M.L."/>
            <person name="Dalla E."/>
            <person name="Dalrymple B.P."/>
            <person name="de Bono B."/>
            <person name="Della Gatta G."/>
            <person name="di Bernardo D."/>
            <person name="Down T."/>
            <person name="Engstrom P."/>
            <person name="Fagiolini M."/>
            <person name="Faulkner G."/>
            <person name="Fletcher C.F."/>
            <person name="Fukushima T."/>
            <person name="Furuno M."/>
            <person name="Futaki S."/>
            <person name="Gariboldi M."/>
            <person name="Georgii-Hemming P."/>
            <person name="Gingeras T.R."/>
            <person name="Gojobori T."/>
            <person name="Green R.E."/>
            <person name="Gustincich S."/>
            <person name="Harbers M."/>
            <person name="Hayashi Y."/>
            <person name="Hensch T.K."/>
            <person name="Hirokawa N."/>
            <person name="Hill D."/>
            <person name="Huminiecki L."/>
            <person name="Iacono M."/>
            <person name="Ikeo K."/>
            <person name="Iwama A."/>
            <person name="Ishikawa T."/>
            <person name="Jakt M."/>
            <person name="Kanapin A."/>
            <person name="Katoh M."/>
            <person name="Kawasawa Y."/>
            <person name="Kelso J."/>
            <person name="Kitamura H."/>
            <person name="Kitano H."/>
            <person name="Kollias G."/>
            <person name="Krishnan S.P."/>
            <person name="Kruger A."/>
            <person name="Kummerfeld S.K."/>
            <person name="Kurochkin I.V."/>
            <person name="Lareau L.F."/>
            <person name="Lazarevic D."/>
            <person name="Lipovich L."/>
            <person name="Liu J."/>
            <person name="Liuni S."/>
            <person name="McWilliam S."/>
            <person name="Madan Babu M."/>
            <person name="Madera M."/>
            <person name="Marchionni L."/>
            <person name="Matsuda H."/>
            <person name="Matsuzawa S."/>
            <person name="Miki H."/>
            <person name="Mignone F."/>
            <person name="Miyake S."/>
            <person name="Morris K."/>
            <person name="Mottagui-Tabar S."/>
            <person name="Mulder N."/>
            <person name="Nakano N."/>
            <person name="Nakauchi H."/>
            <person name="Ng P."/>
            <person name="Nilsson R."/>
            <person name="Nishiguchi S."/>
            <person name="Nishikawa S."/>
            <person name="Nori F."/>
            <person name="Ohara O."/>
            <person name="Okazaki Y."/>
            <person name="Orlando V."/>
            <person name="Pang K.C."/>
            <person name="Pavan W.J."/>
            <person name="Pavesi G."/>
            <person name="Pesole G."/>
            <person name="Petrovsky N."/>
            <person name="Piazza S."/>
            <person name="Reed J."/>
            <person name="Reid J.F."/>
            <person name="Ring B.Z."/>
            <person name="Ringwald M."/>
            <person name="Rost B."/>
            <person name="Ruan Y."/>
            <person name="Salzberg S.L."/>
            <person name="Sandelin A."/>
            <person name="Schneider C."/>
            <person name="Schoenbach C."/>
            <person name="Sekiguchi K."/>
            <person name="Semple C.A."/>
            <person name="Seno S."/>
            <person name="Sessa L."/>
            <person name="Sheng Y."/>
            <person name="Shibata Y."/>
            <person name="Shimada H."/>
            <person name="Shimada K."/>
            <person name="Silva D."/>
            <person name="Sinclair B."/>
            <person name="Sperling S."/>
            <person name="Stupka E."/>
            <person name="Sugiura K."/>
            <person name="Sultana R."/>
            <person name="Takenaka Y."/>
            <person name="Taki K."/>
            <person name="Tammoja K."/>
            <person name="Tan S.L."/>
            <person name="Tang S."/>
            <person name="Taylor M.S."/>
            <person name="Tegner J."/>
            <person name="Teichmann S.A."/>
            <person name="Ueda H.R."/>
            <person name="van Nimwegen E."/>
            <person name="Verardo R."/>
            <person name="Wei C.L."/>
            <person name="Yagi K."/>
            <person name="Yamanishi H."/>
            <person name="Zabarovsky E."/>
            <person name="Zhu S."/>
            <person name="Zimmer A."/>
            <person name="Hide W."/>
            <person name="Bult C."/>
            <person name="Grimmond S.M."/>
            <person name="Teasdale R.D."/>
            <person name="Liu E.T."/>
            <person name="Brusic V."/>
            <person name="Quackenbush J."/>
            <person name="Wahlestedt C."/>
            <person name="Mattick J.S."/>
            <person name="Hume D.A."/>
            <person name="Kai C."/>
            <person name="Sasaki D."/>
            <person name="Tomaru Y."/>
            <person name="Fukuda S."/>
            <person name="Kanamori-Katayama M."/>
            <person name="Suzuki M."/>
            <person name="Aoki J."/>
            <person name="Arakawa T."/>
            <person name="Iida J."/>
            <person name="Imamura K."/>
            <person name="Itoh M."/>
            <person name="Kato T."/>
            <person name="Kawaji H."/>
            <person name="Kawagashira N."/>
            <person name="Kawashima T."/>
            <person name="Kojima M."/>
            <person name="Kondo S."/>
            <person name="Konno H."/>
            <person name="Nakano K."/>
            <person name="Ninomiya N."/>
            <person name="Nishio T."/>
            <person name="Okada M."/>
            <person name="Plessy C."/>
            <person name="Shibata K."/>
            <person name="Shiraki T."/>
            <person name="Suzuki S."/>
            <person name="Tagami M."/>
            <person name="Waki K."/>
            <person name="Watahiki A."/>
            <person name="Okamura-Oho Y."/>
            <person name="Suzuki H."/>
            <person name="Kawai J."/>
            <person name="Hayashizaki Y."/>
        </authorList>
    </citation>
    <scope>NUCLEOTIDE SEQUENCE [LARGE SCALE MRNA]</scope>
    <source>
        <strain>C57BL/6J</strain>
        <tissue>Testis</tissue>
    </source>
</reference>
<reference key="4">
    <citation type="journal article" date="2001" name="Nat. Genet.">
        <title>An abundance of X-linked genes expressed in spermatogonia.</title>
        <authorList>
            <person name="Wang P.J."/>
            <person name="McCarrey J.R."/>
            <person name="Yang F."/>
            <person name="Page D.C."/>
        </authorList>
    </citation>
    <scope>NUCLEOTIDE SEQUENCE [MRNA] OF 27-1172</scope>
    <source>
        <tissue>Ovary</tissue>
        <tissue>Testis</tissue>
    </source>
</reference>
<reference key="5">
    <citation type="journal article" date="2004" name="Genome Res.">
        <title>The status, quality, and expansion of the NIH full-length cDNA project: the Mammalian Gene Collection (MGC).</title>
        <authorList>
            <consortium name="The MGC Project Team"/>
        </authorList>
    </citation>
    <scope>NUCLEOTIDE SEQUENCE [LARGE SCALE MRNA] OF 220-1172</scope>
</reference>
<reference key="6">
    <citation type="journal article" date="2006" name="Hum. Mol. Genet.">
        <title>Mouse MAELSTROM: the link between meiotic silencing of unsynapsed chromatin and microRNA pathway?</title>
        <authorList>
            <person name="Costa Y."/>
            <person name="Speed R.M."/>
            <person name="Gautier P."/>
            <person name="Semple C.A."/>
            <person name="Maratou K."/>
            <person name="Turner J.M.A."/>
            <person name="Cooke H.J."/>
        </authorList>
    </citation>
    <scope>INTERACTION WITH MAEL</scope>
</reference>
<reference key="7">
    <citation type="journal article" date="2007" name="Dev. Biol.">
        <title>Tudor-related proteins TDRD1/MTR-1, TDRD6 and TDRD7/TRAP: domain composition, intracellular localization, and function in male germ cells in mice.</title>
        <authorList>
            <person name="Hosokawa M."/>
            <person name="Shoji M."/>
            <person name="Kitamura K."/>
            <person name="Tanaka T."/>
            <person name="Noce T."/>
            <person name="Chuma S."/>
            <person name="Nakatsuji N."/>
        </authorList>
    </citation>
    <scope>IDENTIFICATION IN A MRNP COMPLEX</scope>
    <scope>SUBCELLULAR LOCATION</scope>
    <scope>MUTAGENESIS OF TYR-1019 AND GLU-1023</scope>
</reference>
<reference key="8">
    <citation type="journal article" date="2009" name="Curr. Biol.">
        <title>Mili interacts with tudor domain-containing protein 1 in regulating spermatogenesis.</title>
        <authorList>
            <person name="Wang J."/>
            <person name="Saxe J.P."/>
            <person name="Tanaka T."/>
            <person name="Chuma S."/>
            <person name="Lin H."/>
        </authorList>
    </citation>
    <scope>SUBCELLULAR LOCATION</scope>
    <scope>INTERACTION WITH PIWIL2</scope>
</reference>
<reference key="9">
    <citation type="journal article" date="2009" name="Genes Dev.">
        <title>Proteomic analysis of murine Piwi proteins reveals a role for arginine methylation in specifying interaction with Tudor family members.</title>
        <authorList>
            <person name="Vagin V.V."/>
            <person name="Wohlschlegel J."/>
            <person name="Qu J."/>
            <person name="Jonsson Z."/>
            <person name="Huang X."/>
            <person name="Chuma S."/>
            <person name="Girard A."/>
            <person name="Sachidanandam R."/>
            <person name="Hannon G.J."/>
            <person name="Aravin A.A."/>
        </authorList>
    </citation>
    <scope>FUNCTION</scope>
    <scope>SUBCELLULAR LOCATION</scope>
    <scope>DISRUPTION PHENOTYPE</scope>
    <scope>INTERACTION WITH PIWIL1; PIWIL2 AND PIWIL4</scope>
</reference>
<reference key="10">
    <citation type="journal article" date="2009" name="Nat. Struct. Mol. Biol.">
        <title>Loss of the Mili-interacting Tudor domain-containing protein-1 activates transposons and alters the Mili-associated small RNA profile.</title>
        <authorList>
            <person name="Reuter M."/>
            <person name="Chuma S."/>
            <person name="Tanaka T."/>
            <person name="Franz T."/>
            <person name="Stark A."/>
            <person name="Pillai R.S."/>
        </authorList>
    </citation>
    <scope>FUNCTION</scope>
    <scope>SUBCELLULAR LOCATION</scope>
    <scope>INTERACTION WITH PIWIL2</scope>
    <scope>DISRUPTION PHENOTYPE</scope>
</reference>
<reference key="11">
    <citation type="journal article" date="2010" name="Cell">
        <title>A tissue-specific atlas of mouse protein phosphorylation and expression.</title>
        <authorList>
            <person name="Huttlin E.L."/>
            <person name="Jedrychowski M.P."/>
            <person name="Elias J.E."/>
            <person name="Goswami T."/>
            <person name="Rad R."/>
            <person name="Beausoleil S.A."/>
            <person name="Villen J."/>
            <person name="Haas W."/>
            <person name="Sowa M.E."/>
            <person name="Gygi S.P."/>
        </authorList>
    </citation>
    <scope>IDENTIFICATION BY MASS SPECTROMETRY [LARGE SCALE ANALYSIS]</scope>
    <source>
        <tissue>Testis</tissue>
    </source>
</reference>
<reference key="12">
    <citation type="journal article" date="2010" name="Genes Dev.">
        <title>MVH in piRNA processing and gene silencing of retrotransposons.</title>
        <authorList>
            <person name="Kuramochi-Miyagawa S."/>
            <person name="Watanabe T."/>
            <person name="Gotoh K."/>
            <person name="Takamatsu K."/>
            <person name="Chuma S."/>
            <person name="Kojima-Kita K."/>
            <person name="Shiromoto Y."/>
            <person name="Asada N."/>
            <person name="Toyoda A."/>
            <person name="Fujiyama A."/>
            <person name="Totoki Y."/>
            <person name="Shibata T."/>
            <person name="Kimura T."/>
            <person name="Nakatsuji N."/>
            <person name="Noce T."/>
            <person name="Sasaki H."/>
            <person name="Nakano T."/>
        </authorList>
    </citation>
    <scope>SUBCELLULAR LOCATION</scope>
</reference>
<reference key="13">
    <citation type="journal article" date="2013" name="Proc. Natl. Acad. Sci. U.S.A.">
        <title>Tudor domain containing 12 (TDRD12) is essential for secondary PIWI interacting RNA biogenesis in mice.</title>
        <authorList>
            <person name="Pandey R.R."/>
            <person name="Tokuzawa Y."/>
            <person name="Yang Z."/>
            <person name="Hayashi E."/>
            <person name="Ichisaka T."/>
            <person name="Kajita S."/>
            <person name="Asano Y."/>
            <person name="Kunieda T."/>
            <person name="Sachidanandam R."/>
            <person name="Chuma S."/>
            <person name="Yamanaka S."/>
            <person name="Pillai R.S."/>
        </authorList>
    </citation>
    <scope>INTERACTION WITH TDRD12</scope>
</reference>
<reference key="14">
    <citation type="journal article" date="2012" name="RNA">
        <title>The multiple Tudor domain-containing protein TDRD1 is a molecular scaffold for mouse Piwi proteins and piRNA biogenesis factors.</title>
        <authorList>
            <person name="Mathioudakis N."/>
            <person name="Palencia A."/>
            <person name="Kadlec J."/>
            <person name="Round A."/>
            <person name="Tripsianes K."/>
            <person name="Sattler M."/>
            <person name="Pillai R.S."/>
            <person name="Cusack S."/>
        </authorList>
    </citation>
    <scope>X-RAY CRYSTALLOGRAPHY (2.1 ANGSTROMS) OF 692-892 ALONE AND IN COMPLEX WITH METHYLATED PEPTIDE</scope>
    <scope>TUDOR DOMAINS</scope>
    <scope>MUTAGENESIS OF ASN-325; TYR-774 AND ASN-796</scope>
    <scope>SUBUNIT</scope>
    <scope>INTERACTION WITH PIWIL2</scope>
</reference>
<keyword id="KW-0002">3D-structure</keyword>
<keyword id="KW-0963">Cytoplasm</keyword>
<keyword id="KW-0217">Developmental protein</keyword>
<keyword id="KW-0221">Differentiation</keyword>
<keyword id="KW-0469">Meiosis</keyword>
<keyword id="KW-0479">Metal-binding</keyword>
<keyword id="KW-1185">Reference proteome</keyword>
<keyword id="KW-0677">Repeat</keyword>
<keyword id="KW-0943">RNA-mediated gene silencing</keyword>
<keyword id="KW-0744">Spermatogenesis</keyword>
<keyword id="KW-0862">Zinc</keyword>
<keyword id="KW-0863">Zinc-finger</keyword>
<proteinExistence type="evidence at protein level"/>
<gene>
    <name type="primary">Tdrd1</name>
</gene>
<feature type="chain" id="PRO_0000183162" description="Tudor domain-containing protein 1">
    <location>
        <begin position="1"/>
        <end position="1172"/>
    </location>
</feature>
<feature type="domain" description="Tudor 1" evidence="2">
    <location>
        <begin position="307"/>
        <end position="367"/>
    </location>
</feature>
<feature type="domain" description="Tudor 2" evidence="2">
    <location>
        <begin position="536"/>
        <end position="595"/>
    </location>
</feature>
<feature type="domain" description="Tudor 3" evidence="2">
    <location>
        <begin position="756"/>
        <end position="815"/>
    </location>
</feature>
<feature type="domain" description="Tudor 4" evidence="2">
    <location>
        <begin position="982"/>
        <end position="1040"/>
    </location>
</feature>
<feature type="zinc finger region" description="MYND-type" evidence="1">
    <location>
        <begin position="163"/>
        <end position="199"/>
    </location>
</feature>
<feature type="region of interest" description="Disordered" evidence="3">
    <location>
        <begin position="1"/>
        <end position="59"/>
    </location>
</feature>
<feature type="region of interest" description="Disordered" evidence="3">
    <location>
        <begin position="72"/>
        <end position="136"/>
    </location>
</feature>
<feature type="compositionally biased region" description="Low complexity" evidence="3">
    <location>
        <begin position="75"/>
        <end position="86"/>
    </location>
</feature>
<feature type="compositionally biased region" description="Low complexity" evidence="3">
    <location>
        <begin position="103"/>
        <end position="117"/>
    </location>
</feature>
<feature type="compositionally biased region" description="Polar residues" evidence="3">
    <location>
        <begin position="118"/>
        <end position="129"/>
    </location>
</feature>
<feature type="binding site" evidence="1">
    <location>
        <position position="163"/>
    </location>
    <ligand>
        <name>Zn(2+)</name>
        <dbReference type="ChEBI" id="CHEBI:29105"/>
        <label>1</label>
    </ligand>
</feature>
<feature type="binding site" evidence="1">
    <location>
        <position position="166"/>
    </location>
    <ligand>
        <name>Zn(2+)</name>
        <dbReference type="ChEBI" id="CHEBI:29105"/>
        <label>1</label>
    </ligand>
</feature>
<feature type="binding site" evidence="1">
    <location>
        <position position="174"/>
    </location>
    <ligand>
        <name>Zn(2+)</name>
        <dbReference type="ChEBI" id="CHEBI:29105"/>
        <label>2</label>
    </ligand>
</feature>
<feature type="binding site" evidence="1">
    <location>
        <position position="177"/>
    </location>
    <ligand>
        <name>Zn(2+)</name>
        <dbReference type="ChEBI" id="CHEBI:29105"/>
        <label>2</label>
    </ligand>
</feature>
<feature type="binding site" evidence="1">
    <location>
        <position position="183"/>
    </location>
    <ligand>
        <name>Zn(2+)</name>
        <dbReference type="ChEBI" id="CHEBI:29105"/>
        <label>1</label>
    </ligand>
</feature>
<feature type="binding site" evidence="1">
    <location>
        <position position="187"/>
    </location>
    <ligand>
        <name>Zn(2+)</name>
        <dbReference type="ChEBI" id="CHEBI:29105"/>
        <label>1</label>
    </ligand>
</feature>
<feature type="binding site" evidence="1">
    <location>
        <position position="195"/>
    </location>
    <ligand>
        <name>Zn(2+)</name>
        <dbReference type="ChEBI" id="CHEBI:29105"/>
        <label>2</label>
    </ligand>
</feature>
<feature type="binding site" evidence="1">
    <location>
        <position position="199"/>
    </location>
    <ligand>
        <name>Zn(2+)</name>
        <dbReference type="ChEBI" id="CHEBI:29105"/>
        <label>2</label>
    </ligand>
</feature>
<feature type="mutagenesis site" description="Strongly enhanced binding to symmetric dimethylarginines." evidence="12">
    <original>N</original>
    <variation>Y</variation>
    <location>
        <position position="325"/>
    </location>
</feature>
<feature type="mutagenesis site" description="Strongly reduced binding to symmetric dimethylarginines." evidence="12">
    <original>Y</original>
    <variation>N</variation>
    <location>
        <position position="774"/>
    </location>
</feature>
<feature type="mutagenesis site" description="Significantly reduced binding to symmetric dimethylarginines." evidence="12">
    <original>N</original>
    <variation>A</variation>
    <location>
        <position position="796"/>
    </location>
</feature>
<feature type="mutagenesis site" description="Abolishes localization to meiotic nuage; when associated with K-1023." evidence="7">
    <original>Y</original>
    <variation>N</variation>
    <location>
        <position position="1019"/>
    </location>
</feature>
<feature type="mutagenesis site" description="Abolishes localization to meiotic nuage; when associated with N-1019." evidence="7">
    <original>E</original>
    <variation>K</variation>
    <location>
        <position position="1023"/>
    </location>
</feature>
<feature type="sequence conflict" description="In Ref. 3; BAC26625." evidence="14" ref="3">
    <original>A</original>
    <variation>G</variation>
    <location>
        <position position="903"/>
    </location>
</feature>
<feature type="sequence conflict" description="In Ref. 5; AAI29956/AAI29955." evidence="14" ref="5">
    <original>I</original>
    <variation>T</variation>
    <location>
        <position position="1128"/>
    </location>
</feature>
<feature type="strand" evidence="15">
    <location>
        <begin position="709"/>
        <end position="719"/>
    </location>
</feature>
<feature type="strand" evidence="15">
    <location>
        <begin position="722"/>
        <end position="727"/>
    </location>
</feature>
<feature type="helix" evidence="15">
    <location>
        <begin position="732"/>
        <end position="748"/>
    </location>
</feature>
<feature type="strand" evidence="15">
    <location>
        <begin position="749"/>
        <end position="751"/>
    </location>
</feature>
<feature type="strand" evidence="15">
    <location>
        <begin position="762"/>
        <end position="766"/>
    </location>
</feature>
<feature type="turn" evidence="15">
    <location>
        <begin position="768"/>
        <end position="770"/>
    </location>
</feature>
<feature type="strand" evidence="15">
    <location>
        <begin position="773"/>
        <end position="781"/>
    </location>
</feature>
<feature type="strand" evidence="15">
    <location>
        <begin position="787"/>
        <end position="791"/>
    </location>
</feature>
<feature type="turn" evidence="15">
    <location>
        <begin position="792"/>
        <end position="794"/>
    </location>
</feature>
<feature type="strand" evidence="15">
    <location>
        <begin position="797"/>
        <end position="800"/>
    </location>
</feature>
<feature type="helix" evidence="15">
    <location>
        <begin position="802"/>
        <end position="804"/>
    </location>
</feature>
<feature type="strand" evidence="15">
    <location>
        <begin position="805"/>
        <end position="807"/>
    </location>
</feature>
<feature type="helix" evidence="15">
    <location>
        <begin position="810"/>
        <end position="813"/>
    </location>
</feature>
<feature type="strand" evidence="15">
    <location>
        <begin position="820"/>
        <end position="828"/>
    </location>
</feature>
<feature type="strand" evidence="15">
    <location>
        <begin position="830"/>
        <end position="833"/>
    </location>
</feature>
<feature type="helix" evidence="15">
    <location>
        <begin position="836"/>
        <end position="846"/>
    </location>
</feature>
<feature type="strand" evidence="15">
    <location>
        <begin position="851"/>
        <end position="859"/>
    </location>
</feature>
<feature type="strand" evidence="15">
    <location>
        <begin position="862"/>
        <end position="869"/>
    </location>
</feature>
<feature type="strand" evidence="15">
    <location>
        <begin position="871"/>
        <end position="874"/>
    </location>
</feature>
<feature type="helix" evidence="15">
    <location>
        <begin position="878"/>
        <end position="884"/>
    </location>
</feature>
<feature type="strand" evidence="15">
    <location>
        <begin position="887"/>
        <end position="890"/>
    </location>
</feature>
<dbReference type="EMBL" id="AB067571">
    <property type="protein sequence ID" value="BAC02433.1"/>
    <property type="molecule type" value="mRNA"/>
</dbReference>
<dbReference type="EMBL" id="AB183526">
    <property type="protein sequence ID" value="BAD27575.1"/>
    <property type="molecule type" value="mRNA"/>
</dbReference>
<dbReference type="EMBL" id="AB183527">
    <property type="protein sequence ID" value="BAD27576.1"/>
    <property type="molecule type" value="mRNA"/>
</dbReference>
<dbReference type="EMBL" id="AB183528">
    <property type="protein sequence ID" value="BAD27577.1"/>
    <property type="molecule type" value="mRNA"/>
</dbReference>
<dbReference type="EMBL" id="AB183529">
    <property type="protein sequence ID" value="BAD27578.1"/>
    <property type="status" value="ALT_INIT"/>
    <property type="molecule type" value="mRNA"/>
</dbReference>
<dbReference type="EMBL" id="AK029806">
    <property type="protein sequence ID" value="BAC26625.1"/>
    <property type="molecule type" value="mRNA"/>
</dbReference>
<dbReference type="EMBL" id="AF285591">
    <property type="protein sequence ID" value="AAK31970.1"/>
    <property type="status" value="ALT_INIT"/>
    <property type="molecule type" value="mRNA"/>
</dbReference>
<dbReference type="EMBL" id="BC129954">
    <property type="protein sequence ID" value="AAI29955.1"/>
    <property type="status" value="ALT_INIT"/>
    <property type="molecule type" value="mRNA"/>
</dbReference>
<dbReference type="EMBL" id="BC129955">
    <property type="protein sequence ID" value="AAI29956.1"/>
    <property type="status" value="ALT_INIT"/>
    <property type="molecule type" value="mRNA"/>
</dbReference>
<dbReference type="CCDS" id="CCDS29922.1"/>
<dbReference type="RefSeq" id="NP_001002238.1">
    <property type="nucleotide sequence ID" value="NM_001002238.2"/>
</dbReference>
<dbReference type="RefSeq" id="NP_001002240.1">
    <property type="nucleotide sequence ID" value="NM_001002240.2"/>
</dbReference>
<dbReference type="RefSeq" id="NP_001002241.1">
    <property type="nucleotide sequence ID" value="NM_001002241.2"/>
</dbReference>
<dbReference type="RefSeq" id="NP_113564.2">
    <property type="nucleotide sequence ID" value="NM_031387.3"/>
</dbReference>
<dbReference type="PDB" id="4B9W">
    <property type="method" value="X-ray"/>
    <property type="resolution" value="2.10 A"/>
    <property type="chains" value="A/B=692-892"/>
</dbReference>
<dbReference type="PDB" id="4B9X">
    <property type="method" value="X-ray"/>
    <property type="resolution" value="2.80 A"/>
    <property type="chains" value="A=692-917"/>
</dbReference>
<dbReference type="PDBsum" id="4B9W"/>
<dbReference type="PDBsum" id="4B9X"/>
<dbReference type="SMR" id="Q99MV1"/>
<dbReference type="BioGRID" id="219947">
    <property type="interactions" value="12"/>
</dbReference>
<dbReference type="CORUM" id="Q99MV1"/>
<dbReference type="DIP" id="DIP-48523N"/>
<dbReference type="FunCoup" id="Q99MV1">
    <property type="interactions" value="71"/>
</dbReference>
<dbReference type="IntAct" id="Q99MV1">
    <property type="interactions" value="3"/>
</dbReference>
<dbReference type="MINT" id="Q99MV1"/>
<dbReference type="STRING" id="10090.ENSMUSP00000107231"/>
<dbReference type="GlyGen" id="Q99MV1">
    <property type="glycosylation" value="1 site"/>
</dbReference>
<dbReference type="iPTMnet" id="Q99MV1"/>
<dbReference type="PhosphoSitePlus" id="Q99MV1"/>
<dbReference type="SwissPalm" id="Q99MV1"/>
<dbReference type="PaxDb" id="10090-ENSMUSP00000107231"/>
<dbReference type="PeptideAtlas" id="Q99MV1"/>
<dbReference type="ProteomicsDB" id="262743"/>
<dbReference type="Pumba" id="Q99MV1"/>
<dbReference type="Antibodypedia" id="31923">
    <property type="antibodies" value="138 antibodies from 24 providers"/>
</dbReference>
<dbReference type="DNASU" id="83561"/>
<dbReference type="Ensembl" id="ENSMUST00000078723.11">
    <property type="protein sequence ID" value="ENSMUSP00000077785.5"/>
    <property type="gene ID" value="ENSMUSG00000025081.14"/>
</dbReference>
<dbReference type="Ensembl" id="ENSMUST00000111604.2">
    <property type="protein sequence ID" value="ENSMUSP00000107231.2"/>
    <property type="gene ID" value="ENSMUSG00000025081.14"/>
</dbReference>
<dbReference type="Ensembl" id="ENSMUST00000111606.8">
    <property type="protein sequence ID" value="ENSMUSP00000107233.2"/>
    <property type="gene ID" value="ENSMUSG00000025081.14"/>
</dbReference>
<dbReference type="Ensembl" id="ENSMUST00000121249.8">
    <property type="protein sequence ID" value="ENSMUSP00000112786.2"/>
    <property type="gene ID" value="ENSMUSG00000025081.14"/>
</dbReference>
<dbReference type="GeneID" id="83561"/>
<dbReference type="KEGG" id="mmu:83561"/>
<dbReference type="UCSC" id="uc008hzi.1">
    <property type="organism name" value="mouse"/>
</dbReference>
<dbReference type="AGR" id="MGI:1933218"/>
<dbReference type="CTD" id="56165"/>
<dbReference type="MGI" id="MGI:1933218">
    <property type="gene designation" value="Tdrd1"/>
</dbReference>
<dbReference type="VEuPathDB" id="HostDB:ENSMUSG00000025081"/>
<dbReference type="eggNOG" id="KOG2039">
    <property type="taxonomic scope" value="Eukaryota"/>
</dbReference>
<dbReference type="GeneTree" id="ENSGT00940000158754"/>
<dbReference type="HOGENOM" id="CLU_010832_0_0_1"/>
<dbReference type="InParanoid" id="Q99MV1"/>
<dbReference type="OMA" id="YCSAQKS"/>
<dbReference type="OrthoDB" id="341421at2759"/>
<dbReference type="PhylomeDB" id="Q99MV1"/>
<dbReference type="BioGRID-ORCS" id="83561">
    <property type="hits" value="2 hits in 82 CRISPR screens"/>
</dbReference>
<dbReference type="CD-CODE" id="DE1E139C">
    <property type="entry name" value="Chromatoid body"/>
</dbReference>
<dbReference type="ChiTaRS" id="Tdrd1">
    <property type="organism name" value="mouse"/>
</dbReference>
<dbReference type="EvolutionaryTrace" id="Q99MV1"/>
<dbReference type="PRO" id="PR:Q99MV1"/>
<dbReference type="Proteomes" id="UP000000589">
    <property type="component" value="Chromosome 19"/>
</dbReference>
<dbReference type="RNAct" id="Q99MV1">
    <property type="molecule type" value="protein"/>
</dbReference>
<dbReference type="Bgee" id="ENSMUSG00000025081">
    <property type="expression patterns" value="Expressed in animal zygote and 43 other cell types or tissues"/>
</dbReference>
<dbReference type="GO" id="GO:0033391">
    <property type="term" value="C:chromatoid body"/>
    <property type="evidence" value="ECO:0000314"/>
    <property type="project" value="MGI"/>
</dbReference>
<dbReference type="GO" id="GO:0005737">
    <property type="term" value="C:cytoplasm"/>
    <property type="evidence" value="ECO:0000314"/>
    <property type="project" value="MGI"/>
</dbReference>
<dbReference type="GO" id="GO:0005829">
    <property type="term" value="C:cytosol"/>
    <property type="evidence" value="ECO:0000304"/>
    <property type="project" value="Reactome"/>
</dbReference>
<dbReference type="GO" id="GO:0043186">
    <property type="term" value="C:P granule"/>
    <property type="evidence" value="ECO:0000314"/>
    <property type="project" value="UniProtKB"/>
</dbReference>
<dbReference type="GO" id="GO:0071546">
    <property type="term" value="C:pi-body"/>
    <property type="evidence" value="ECO:0000314"/>
    <property type="project" value="UniProtKB"/>
</dbReference>
<dbReference type="GO" id="GO:1990904">
    <property type="term" value="C:ribonucleoprotein complex"/>
    <property type="evidence" value="ECO:0000314"/>
    <property type="project" value="MGI"/>
</dbReference>
<dbReference type="GO" id="GO:0045202">
    <property type="term" value="C:synapse"/>
    <property type="evidence" value="ECO:0000314"/>
    <property type="project" value="SynGO"/>
</dbReference>
<dbReference type="GO" id="GO:0008270">
    <property type="term" value="F:zinc ion binding"/>
    <property type="evidence" value="ECO:0007669"/>
    <property type="project" value="UniProtKB-KW"/>
</dbReference>
<dbReference type="GO" id="GO:0007281">
    <property type="term" value="P:germ cell development"/>
    <property type="evidence" value="ECO:0000315"/>
    <property type="project" value="UniProtKB"/>
</dbReference>
<dbReference type="GO" id="GO:0051321">
    <property type="term" value="P:meiotic cell cycle"/>
    <property type="evidence" value="ECO:0007669"/>
    <property type="project" value="UniProtKB-KW"/>
</dbReference>
<dbReference type="GO" id="GO:0034587">
    <property type="term" value="P:piRNA processing"/>
    <property type="evidence" value="ECO:0000315"/>
    <property type="project" value="UniProtKB"/>
</dbReference>
<dbReference type="GO" id="GO:0007283">
    <property type="term" value="P:spermatogenesis"/>
    <property type="evidence" value="ECO:0000315"/>
    <property type="project" value="UniProtKB"/>
</dbReference>
<dbReference type="GO" id="GO:0141196">
    <property type="term" value="P:transposable element silencing by piRNA-mediated DNA methylation"/>
    <property type="evidence" value="ECO:0000315"/>
    <property type="project" value="UniProtKB"/>
</dbReference>
<dbReference type="CDD" id="cd20408">
    <property type="entry name" value="Tudor_TDRD1_rpt1"/>
    <property type="match status" value="1"/>
</dbReference>
<dbReference type="CDD" id="cd20409">
    <property type="entry name" value="Tudor_TDRD1_rpt2"/>
    <property type="match status" value="1"/>
</dbReference>
<dbReference type="CDD" id="cd20410">
    <property type="entry name" value="Tudor_TDRD1_rpt3"/>
    <property type="match status" value="1"/>
</dbReference>
<dbReference type="FunFam" id="2.30.30.140:FF:000018">
    <property type="entry name" value="Serine/threonine-protein kinase 31"/>
    <property type="match status" value="1"/>
</dbReference>
<dbReference type="FunFam" id="2.30.30.140:FF:000048">
    <property type="entry name" value="Tudor domain containing 1"/>
    <property type="match status" value="2"/>
</dbReference>
<dbReference type="FunFam" id="6.10.140.2220:FF:000011">
    <property type="entry name" value="Tudor domain containing 1"/>
    <property type="match status" value="1"/>
</dbReference>
<dbReference type="FunFam" id="2.30.30.140:FF:000081">
    <property type="entry name" value="Tudor domain-containing protein 1"/>
    <property type="match status" value="1"/>
</dbReference>
<dbReference type="Gene3D" id="2.30.30.140">
    <property type="match status" value="4"/>
</dbReference>
<dbReference type="Gene3D" id="2.40.50.90">
    <property type="match status" value="4"/>
</dbReference>
<dbReference type="Gene3D" id="6.10.140.2220">
    <property type="match status" value="1"/>
</dbReference>
<dbReference type="InterPro" id="IPR035437">
    <property type="entry name" value="SNase_OB-fold_sf"/>
</dbReference>
<dbReference type="InterPro" id="IPR002999">
    <property type="entry name" value="Tudor"/>
</dbReference>
<dbReference type="InterPro" id="IPR050621">
    <property type="entry name" value="Tudor_domain_containing"/>
</dbReference>
<dbReference type="InterPro" id="IPR047376">
    <property type="entry name" value="Tudor_TDRD1_rpt1"/>
</dbReference>
<dbReference type="InterPro" id="IPR047377">
    <property type="entry name" value="Tudor_TDRD1_rpt2"/>
</dbReference>
<dbReference type="InterPro" id="IPR047378">
    <property type="entry name" value="Tudor_TDRD1_rpt3"/>
</dbReference>
<dbReference type="InterPro" id="IPR002893">
    <property type="entry name" value="Znf_MYND"/>
</dbReference>
<dbReference type="PANTHER" id="PTHR22948:SF29">
    <property type="entry name" value="FI02030P-RELATED"/>
    <property type="match status" value="1"/>
</dbReference>
<dbReference type="PANTHER" id="PTHR22948">
    <property type="entry name" value="TUDOR DOMAIN CONTAINING PROTEIN"/>
    <property type="match status" value="1"/>
</dbReference>
<dbReference type="Pfam" id="PF00567">
    <property type="entry name" value="TUDOR"/>
    <property type="match status" value="4"/>
</dbReference>
<dbReference type="Pfam" id="PF01753">
    <property type="entry name" value="zf-MYND"/>
    <property type="match status" value="1"/>
</dbReference>
<dbReference type="SMART" id="SM00333">
    <property type="entry name" value="TUDOR"/>
    <property type="match status" value="4"/>
</dbReference>
<dbReference type="SUPFAM" id="SSF144232">
    <property type="entry name" value="HIT/MYND zinc finger-like"/>
    <property type="match status" value="1"/>
</dbReference>
<dbReference type="SUPFAM" id="SSF63748">
    <property type="entry name" value="Tudor/PWWP/MBT"/>
    <property type="match status" value="4"/>
</dbReference>
<dbReference type="PROSITE" id="PS50304">
    <property type="entry name" value="TUDOR"/>
    <property type="match status" value="4"/>
</dbReference>
<dbReference type="PROSITE" id="PS01360">
    <property type="entry name" value="ZF_MYND_1"/>
    <property type="match status" value="1"/>
</dbReference>
<dbReference type="PROSITE" id="PS50865">
    <property type="entry name" value="ZF_MYND_2"/>
    <property type="match status" value="1"/>
</dbReference>
<organism>
    <name type="scientific">Mus musculus</name>
    <name type="common">Mouse</name>
    <dbReference type="NCBI Taxonomy" id="10090"/>
    <lineage>
        <taxon>Eukaryota</taxon>
        <taxon>Metazoa</taxon>
        <taxon>Chordata</taxon>
        <taxon>Craniata</taxon>
        <taxon>Vertebrata</taxon>
        <taxon>Euteleostomi</taxon>
        <taxon>Mammalia</taxon>
        <taxon>Eutheria</taxon>
        <taxon>Euarchontoglires</taxon>
        <taxon>Glires</taxon>
        <taxon>Rodentia</taxon>
        <taxon>Myomorpha</taxon>
        <taxon>Muroidea</taxon>
        <taxon>Muridae</taxon>
        <taxon>Murinae</taxon>
        <taxon>Mus</taxon>
        <taxon>Mus</taxon>
    </lineage>
</organism>
<name>TDRD1_MOUSE</name>
<protein>
    <recommendedName>
        <fullName>Tudor domain-containing protein 1</fullName>
    </recommendedName>
</protein>